<gene>
    <name evidence="1" type="primary">rplO</name>
    <name type="ordered locus">P9515_17231</name>
</gene>
<evidence type="ECO:0000255" key="1">
    <source>
        <dbReference type="HAMAP-Rule" id="MF_01341"/>
    </source>
</evidence>
<evidence type="ECO:0000256" key="2">
    <source>
        <dbReference type="SAM" id="MobiDB-lite"/>
    </source>
</evidence>
<evidence type="ECO:0000305" key="3"/>
<keyword id="KW-0687">Ribonucleoprotein</keyword>
<keyword id="KW-0689">Ribosomal protein</keyword>
<keyword id="KW-0694">RNA-binding</keyword>
<keyword id="KW-0699">rRNA-binding</keyword>
<organism>
    <name type="scientific">Prochlorococcus marinus (strain MIT 9515)</name>
    <dbReference type="NCBI Taxonomy" id="167542"/>
    <lineage>
        <taxon>Bacteria</taxon>
        <taxon>Bacillati</taxon>
        <taxon>Cyanobacteriota</taxon>
        <taxon>Cyanophyceae</taxon>
        <taxon>Synechococcales</taxon>
        <taxon>Prochlorococcaceae</taxon>
        <taxon>Prochlorococcus</taxon>
    </lineage>
</organism>
<protein>
    <recommendedName>
        <fullName evidence="1">Large ribosomal subunit protein uL15</fullName>
    </recommendedName>
    <alternativeName>
        <fullName evidence="3">50S ribosomal protein L15</fullName>
    </alternativeName>
</protein>
<sequence length="152" mass="16784">MTSTLNTLKSNLGSRKKKLRKGRGIAAGQGASCGFGMRGQKSRSGRPTRPGFEGGQMPLYRRVPKLKHFEIINQKNYSIVNLSKLSEFKDNEIVNIDSLVKKKLLFKPKFPLKILGNGVVKVKLKVQAHAFTKVAQEKIESAGGSCEVLNNK</sequence>
<proteinExistence type="inferred from homology"/>
<feature type="chain" id="PRO_1000054514" description="Large ribosomal subunit protein uL15">
    <location>
        <begin position="1"/>
        <end position="152"/>
    </location>
</feature>
<feature type="region of interest" description="Disordered" evidence="2">
    <location>
        <begin position="1"/>
        <end position="56"/>
    </location>
</feature>
<feature type="compositionally biased region" description="Basic residues" evidence="2">
    <location>
        <begin position="14"/>
        <end position="23"/>
    </location>
</feature>
<feature type="compositionally biased region" description="Gly residues" evidence="2">
    <location>
        <begin position="25"/>
        <end position="37"/>
    </location>
</feature>
<reference key="1">
    <citation type="journal article" date="2007" name="PLoS Genet.">
        <title>Patterns and implications of gene gain and loss in the evolution of Prochlorococcus.</title>
        <authorList>
            <person name="Kettler G.C."/>
            <person name="Martiny A.C."/>
            <person name="Huang K."/>
            <person name="Zucker J."/>
            <person name="Coleman M.L."/>
            <person name="Rodrigue S."/>
            <person name="Chen F."/>
            <person name="Lapidus A."/>
            <person name="Ferriera S."/>
            <person name="Johnson J."/>
            <person name="Steglich C."/>
            <person name="Church G.M."/>
            <person name="Richardson P."/>
            <person name="Chisholm S.W."/>
        </authorList>
    </citation>
    <scope>NUCLEOTIDE SEQUENCE [LARGE SCALE GENOMIC DNA]</scope>
    <source>
        <strain>MIT 9515</strain>
    </source>
</reference>
<name>RL15_PROM5</name>
<comment type="function">
    <text evidence="1">Binds to the 23S rRNA.</text>
</comment>
<comment type="subunit">
    <text evidence="1">Part of the 50S ribosomal subunit.</text>
</comment>
<comment type="similarity">
    <text evidence="1">Belongs to the universal ribosomal protein uL15 family.</text>
</comment>
<accession>A2BYR9</accession>
<dbReference type="EMBL" id="CP000552">
    <property type="protein sequence ID" value="ABM72930.1"/>
    <property type="molecule type" value="Genomic_DNA"/>
</dbReference>
<dbReference type="RefSeq" id="WP_011821021.1">
    <property type="nucleotide sequence ID" value="NC_008817.1"/>
</dbReference>
<dbReference type="SMR" id="A2BYR9"/>
<dbReference type="STRING" id="167542.P9515_17231"/>
<dbReference type="GeneID" id="60201415"/>
<dbReference type="KEGG" id="pmc:P9515_17231"/>
<dbReference type="eggNOG" id="COG0200">
    <property type="taxonomic scope" value="Bacteria"/>
</dbReference>
<dbReference type="HOGENOM" id="CLU_055188_4_1_3"/>
<dbReference type="OrthoDB" id="9810293at2"/>
<dbReference type="Proteomes" id="UP000001589">
    <property type="component" value="Chromosome"/>
</dbReference>
<dbReference type="GO" id="GO:0022625">
    <property type="term" value="C:cytosolic large ribosomal subunit"/>
    <property type="evidence" value="ECO:0007669"/>
    <property type="project" value="TreeGrafter"/>
</dbReference>
<dbReference type="GO" id="GO:0019843">
    <property type="term" value="F:rRNA binding"/>
    <property type="evidence" value="ECO:0007669"/>
    <property type="project" value="UniProtKB-UniRule"/>
</dbReference>
<dbReference type="GO" id="GO:0003735">
    <property type="term" value="F:structural constituent of ribosome"/>
    <property type="evidence" value="ECO:0007669"/>
    <property type="project" value="InterPro"/>
</dbReference>
<dbReference type="GO" id="GO:0006412">
    <property type="term" value="P:translation"/>
    <property type="evidence" value="ECO:0007669"/>
    <property type="project" value="UniProtKB-UniRule"/>
</dbReference>
<dbReference type="Gene3D" id="3.100.10.10">
    <property type="match status" value="1"/>
</dbReference>
<dbReference type="HAMAP" id="MF_01341">
    <property type="entry name" value="Ribosomal_uL15"/>
    <property type="match status" value="1"/>
</dbReference>
<dbReference type="InterPro" id="IPR030878">
    <property type="entry name" value="Ribosomal_uL15"/>
</dbReference>
<dbReference type="InterPro" id="IPR021131">
    <property type="entry name" value="Ribosomal_uL15/eL18"/>
</dbReference>
<dbReference type="InterPro" id="IPR036227">
    <property type="entry name" value="Ribosomal_uL15/eL18_sf"/>
</dbReference>
<dbReference type="InterPro" id="IPR005749">
    <property type="entry name" value="Ribosomal_uL15_bac-type"/>
</dbReference>
<dbReference type="InterPro" id="IPR001196">
    <property type="entry name" value="Ribosomal_uL15_CS"/>
</dbReference>
<dbReference type="NCBIfam" id="TIGR01071">
    <property type="entry name" value="rplO_bact"/>
    <property type="match status" value="1"/>
</dbReference>
<dbReference type="PANTHER" id="PTHR12934">
    <property type="entry name" value="50S RIBOSOMAL PROTEIN L15"/>
    <property type="match status" value="1"/>
</dbReference>
<dbReference type="PANTHER" id="PTHR12934:SF11">
    <property type="entry name" value="LARGE RIBOSOMAL SUBUNIT PROTEIN UL15M"/>
    <property type="match status" value="1"/>
</dbReference>
<dbReference type="Pfam" id="PF00828">
    <property type="entry name" value="Ribosomal_L27A"/>
    <property type="match status" value="1"/>
</dbReference>
<dbReference type="SUPFAM" id="SSF52080">
    <property type="entry name" value="Ribosomal proteins L15p and L18e"/>
    <property type="match status" value="1"/>
</dbReference>
<dbReference type="PROSITE" id="PS00475">
    <property type="entry name" value="RIBOSOMAL_L15"/>
    <property type="match status" value="1"/>
</dbReference>